<comment type="function">
    <text evidence="1">Part of the phosphoribosylformylglycinamidine synthase complex involved in the purines biosynthetic pathway. Catalyzes the ATP-dependent conversion of formylglycinamide ribonucleotide (FGAR) and glutamine to yield formylglycinamidine ribonucleotide (FGAM) and glutamate. The FGAM synthase complex is composed of three subunits. PurQ produces an ammonia molecule by converting glutamine to glutamate. PurL transfers the ammonia molecule to FGAR to form FGAM in an ATP-dependent manner. PurS interacts with PurQ and PurL and is thought to assist in the transfer of the ammonia molecule from PurQ to PurL.</text>
</comment>
<comment type="catalytic activity">
    <reaction evidence="1">
        <text>N(2)-formyl-N(1)-(5-phospho-beta-D-ribosyl)glycinamide + L-glutamine + ATP + H2O = 2-formamido-N(1)-(5-O-phospho-beta-D-ribosyl)acetamidine + L-glutamate + ADP + phosphate + H(+)</text>
        <dbReference type="Rhea" id="RHEA:17129"/>
        <dbReference type="ChEBI" id="CHEBI:15377"/>
        <dbReference type="ChEBI" id="CHEBI:15378"/>
        <dbReference type="ChEBI" id="CHEBI:29985"/>
        <dbReference type="ChEBI" id="CHEBI:30616"/>
        <dbReference type="ChEBI" id="CHEBI:43474"/>
        <dbReference type="ChEBI" id="CHEBI:58359"/>
        <dbReference type="ChEBI" id="CHEBI:147286"/>
        <dbReference type="ChEBI" id="CHEBI:147287"/>
        <dbReference type="ChEBI" id="CHEBI:456216"/>
        <dbReference type="EC" id="6.3.5.3"/>
    </reaction>
</comment>
<comment type="pathway">
    <text evidence="1">Purine metabolism; IMP biosynthesis via de novo pathway; 5-amino-1-(5-phospho-D-ribosyl)imidazole from N(2)-formyl-N(1)-(5-phospho-D-ribosyl)glycinamide: step 1/2.</text>
</comment>
<comment type="subunit">
    <text evidence="1">Monomer. Part of the FGAM synthase complex composed of 1 PurL, 1 PurQ and 2 PurS subunits.</text>
</comment>
<comment type="subcellular location">
    <subcellularLocation>
        <location evidence="1">Cytoplasm</location>
    </subcellularLocation>
</comment>
<comment type="similarity">
    <text evidence="1">Belongs to the FGAMS family.</text>
</comment>
<reference key="1">
    <citation type="journal article" date="2006" name="Science">
        <title>Genomic islands and the ecology and evolution of Prochlorococcus.</title>
        <authorList>
            <person name="Coleman M.L."/>
            <person name="Sullivan M.B."/>
            <person name="Martiny A.C."/>
            <person name="Steglich C."/>
            <person name="Barry K."/>
            <person name="Delong E.F."/>
            <person name="Chisholm S.W."/>
        </authorList>
    </citation>
    <scope>NUCLEOTIDE SEQUENCE [LARGE SCALE GENOMIC DNA]</scope>
    <source>
        <strain>MIT 9312</strain>
    </source>
</reference>
<protein>
    <recommendedName>
        <fullName evidence="1">Phosphoribosylformylglycinamidine synthase subunit PurL</fullName>
        <shortName evidence="1">FGAM synthase</shortName>
        <ecNumber evidence="1">6.3.5.3</ecNumber>
    </recommendedName>
    <alternativeName>
        <fullName evidence="1">Formylglycinamide ribonucleotide amidotransferase subunit II</fullName>
        <shortName evidence="1">FGAR amidotransferase II</shortName>
        <shortName evidence="1">FGAR-AT II</shortName>
    </alternativeName>
    <alternativeName>
        <fullName evidence="1">Glutamine amidotransferase PurL</fullName>
    </alternativeName>
    <alternativeName>
        <fullName evidence="1">Phosphoribosylformylglycinamidine synthase subunit II</fullName>
    </alternativeName>
</protein>
<name>PURL_PROM9</name>
<dbReference type="EC" id="6.3.5.3" evidence="1"/>
<dbReference type="EMBL" id="CP000111">
    <property type="protein sequence ID" value="ABB49064.1"/>
    <property type="molecule type" value="Genomic_DNA"/>
</dbReference>
<dbReference type="RefSeq" id="WP_011375568.1">
    <property type="nucleotide sequence ID" value="NC_007577.1"/>
</dbReference>
<dbReference type="SMR" id="Q31DI1"/>
<dbReference type="STRING" id="74546.PMT9312_0003"/>
<dbReference type="KEGG" id="pmi:PMT9312_0003"/>
<dbReference type="eggNOG" id="COG0046">
    <property type="taxonomic scope" value="Bacteria"/>
</dbReference>
<dbReference type="HOGENOM" id="CLU_003100_0_1_3"/>
<dbReference type="OrthoDB" id="9804441at2"/>
<dbReference type="UniPathway" id="UPA00074">
    <property type="reaction ID" value="UER00128"/>
</dbReference>
<dbReference type="Proteomes" id="UP000002715">
    <property type="component" value="Chromosome"/>
</dbReference>
<dbReference type="GO" id="GO:0005737">
    <property type="term" value="C:cytoplasm"/>
    <property type="evidence" value="ECO:0007669"/>
    <property type="project" value="UniProtKB-SubCell"/>
</dbReference>
<dbReference type="GO" id="GO:0005524">
    <property type="term" value="F:ATP binding"/>
    <property type="evidence" value="ECO:0007669"/>
    <property type="project" value="UniProtKB-UniRule"/>
</dbReference>
<dbReference type="GO" id="GO:0000287">
    <property type="term" value="F:magnesium ion binding"/>
    <property type="evidence" value="ECO:0007669"/>
    <property type="project" value="UniProtKB-UniRule"/>
</dbReference>
<dbReference type="GO" id="GO:0004642">
    <property type="term" value="F:phosphoribosylformylglycinamidine synthase activity"/>
    <property type="evidence" value="ECO:0007669"/>
    <property type="project" value="UniProtKB-UniRule"/>
</dbReference>
<dbReference type="GO" id="GO:0006189">
    <property type="term" value="P:'de novo' IMP biosynthetic process"/>
    <property type="evidence" value="ECO:0007669"/>
    <property type="project" value="UniProtKB-UniRule"/>
</dbReference>
<dbReference type="CDD" id="cd02203">
    <property type="entry name" value="PurL_repeat1"/>
    <property type="match status" value="1"/>
</dbReference>
<dbReference type="CDD" id="cd02204">
    <property type="entry name" value="PurL_repeat2"/>
    <property type="match status" value="1"/>
</dbReference>
<dbReference type="FunFam" id="3.30.1330.10:FF:000004">
    <property type="entry name" value="Phosphoribosylformylglycinamidine synthase subunit PurL"/>
    <property type="match status" value="1"/>
</dbReference>
<dbReference type="Gene3D" id="3.90.650.10">
    <property type="entry name" value="PurM-like C-terminal domain"/>
    <property type="match status" value="2"/>
</dbReference>
<dbReference type="Gene3D" id="3.30.1330.10">
    <property type="entry name" value="PurM-like, N-terminal domain"/>
    <property type="match status" value="2"/>
</dbReference>
<dbReference type="HAMAP" id="MF_00420">
    <property type="entry name" value="PurL_2"/>
    <property type="match status" value="1"/>
</dbReference>
<dbReference type="InterPro" id="IPR010074">
    <property type="entry name" value="PRibForGlyAmidine_synth_PurL"/>
</dbReference>
<dbReference type="InterPro" id="IPR041609">
    <property type="entry name" value="PurL_linker"/>
</dbReference>
<dbReference type="InterPro" id="IPR010918">
    <property type="entry name" value="PurM-like_C_dom"/>
</dbReference>
<dbReference type="InterPro" id="IPR036676">
    <property type="entry name" value="PurM-like_C_sf"/>
</dbReference>
<dbReference type="InterPro" id="IPR016188">
    <property type="entry name" value="PurM-like_N"/>
</dbReference>
<dbReference type="InterPro" id="IPR036921">
    <property type="entry name" value="PurM-like_N_sf"/>
</dbReference>
<dbReference type="NCBIfam" id="TIGR01736">
    <property type="entry name" value="FGAM_synth_II"/>
    <property type="match status" value="1"/>
</dbReference>
<dbReference type="NCBIfam" id="NF002290">
    <property type="entry name" value="PRK01213.1"/>
    <property type="match status" value="1"/>
</dbReference>
<dbReference type="PANTHER" id="PTHR43555">
    <property type="entry name" value="PHOSPHORIBOSYLFORMYLGLYCINAMIDINE SYNTHASE SUBUNIT PURL"/>
    <property type="match status" value="1"/>
</dbReference>
<dbReference type="PANTHER" id="PTHR43555:SF1">
    <property type="entry name" value="PHOSPHORIBOSYLFORMYLGLYCINAMIDINE SYNTHASE SUBUNIT PURL"/>
    <property type="match status" value="1"/>
</dbReference>
<dbReference type="Pfam" id="PF00586">
    <property type="entry name" value="AIRS"/>
    <property type="match status" value="2"/>
</dbReference>
<dbReference type="Pfam" id="PF02769">
    <property type="entry name" value="AIRS_C"/>
    <property type="match status" value="2"/>
</dbReference>
<dbReference type="Pfam" id="PF18072">
    <property type="entry name" value="FGAR-AT_linker"/>
    <property type="match status" value="1"/>
</dbReference>
<dbReference type="PIRSF" id="PIRSF001587">
    <property type="entry name" value="FGAM_synthase_II"/>
    <property type="match status" value="1"/>
</dbReference>
<dbReference type="SUPFAM" id="SSF56042">
    <property type="entry name" value="PurM C-terminal domain-like"/>
    <property type="match status" value="2"/>
</dbReference>
<dbReference type="SUPFAM" id="SSF55326">
    <property type="entry name" value="PurM N-terminal domain-like"/>
    <property type="match status" value="2"/>
</dbReference>
<evidence type="ECO:0000255" key="1">
    <source>
        <dbReference type="HAMAP-Rule" id="MF_00420"/>
    </source>
</evidence>
<proteinExistence type="inferred from homology"/>
<organism>
    <name type="scientific">Prochlorococcus marinus (strain MIT 9312)</name>
    <dbReference type="NCBI Taxonomy" id="74546"/>
    <lineage>
        <taxon>Bacteria</taxon>
        <taxon>Bacillati</taxon>
        <taxon>Cyanobacteriota</taxon>
        <taxon>Cyanophyceae</taxon>
        <taxon>Synechococcales</taxon>
        <taxon>Prochlorococcaceae</taxon>
        <taxon>Prochlorococcus</taxon>
    </lineage>
</organism>
<accession>Q31DI1</accession>
<feature type="chain" id="PRO_0000236660" description="Phosphoribosylformylglycinamidine synthase subunit PurL">
    <location>
        <begin position="1"/>
        <end position="779"/>
    </location>
</feature>
<feature type="active site" evidence="1">
    <location>
        <position position="52"/>
    </location>
</feature>
<feature type="active site" description="Proton acceptor" evidence="1">
    <location>
        <position position="98"/>
    </location>
</feature>
<feature type="binding site" evidence="1">
    <location>
        <position position="55"/>
    </location>
    <ligand>
        <name>ATP</name>
        <dbReference type="ChEBI" id="CHEBI:30616"/>
    </ligand>
</feature>
<feature type="binding site" evidence="1">
    <location>
        <position position="94"/>
    </location>
    <ligand>
        <name>ATP</name>
        <dbReference type="ChEBI" id="CHEBI:30616"/>
    </ligand>
</feature>
<feature type="binding site" evidence="1">
    <location>
        <position position="96"/>
    </location>
    <ligand>
        <name>Mg(2+)</name>
        <dbReference type="ChEBI" id="CHEBI:18420"/>
        <label>1</label>
    </ligand>
</feature>
<feature type="binding site" evidence="1">
    <location>
        <begin position="97"/>
        <end position="100"/>
    </location>
    <ligand>
        <name>substrate</name>
    </ligand>
</feature>
<feature type="binding site" evidence="1">
    <location>
        <position position="119"/>
    </location>
    <ligand>
        <name>substrate</name>
    </ligand>
</feature>
<feature type="binding site" evidence="1">
    <location>
        <position position="120"/>
    </location>
    <ligand>
        <name>Mg(2+)</name>
        <dbReference type="ChEBI" id="CHEBI:18420"/>
        <label>2</label>
    </ligand>
</feature>
<feature type="binding site" evidence="1">
    <location>
        <position position="243"/>
    </location>
    <ligand>
        <name>substrate</name>
    </ligand>
</feature>
<feature type="binding site" evidence="1">
    <location>
        <position position="271"/>
    </location>
    <ligand>
        <name>Mg(2+)</name>
        <dbReference type="ChEBI" id="CHEBI:18420"/>
        <label>2</label>
    </ligand>
</feature>
<feature type="binding site" evidence="1">
    <location>
        <begin position="315"/>
        <end position="317"/>
    </location>
    <ligand>
        <name>substrate</name>
    </ligand>
</feature>
<feature type="binding site" evidence="1">
    <location>
        <position position="523"/>
    </location>
    <ligand>
        <name>ATP</name>
        <dbReference type="ChEBI" id="CHEBI:30616"/>
    </ligand>
</feature>
<feature type="binding site" evidence="1">
    <location>
        <position position="560"/>
    </location>
    <ligand>
        <name>ATP</name>
        <dbReference type="ChEBI" id="CHEBI:30616"/>
    </ligand>
</feature>
<feature type="binding site" evidence="1">
    <location>
        <position position="561"/>
    </location>
    <ligand>
        <name>Mg(2+)</name>
        <dbReference type="ChEBI" id="CHEBI:18420"/>
        <label>1</label>
    </ligand>
</feature>
<feature type="binding site" evidence="1">
    <location>
        <position position="563"/>
    </location>
    <ligand>
        <name>substrate</name>
    </ligand>
</feature>
<keyword id="KW-0067">ATP-binding</keyword>
<keyword id="KW-0963">Cytoplasm</keyword>
<keyword id="KW-0436">Ligase</keyword>
<keyword id="KW-0460">Magnesium</keyword>
<keyword id="KW-0479">Metal-binding</keyword>
<keyword id="KW-0547">Nucleotide-binding</keyword>
<keyword id="KW-0658">Purine biosynthesis</keyword>
<gene>
    <name evidence="1" type="primary">purL</name>
    <name type="ordered locus">PMT9312_0003</name>
</gene>
<sequence length="779" mass="85620">MINPDNNDLYDLNEALKVENLTINDYEEICKRLKRKPNRTELGMFGVMWSEHCCYRNSKPLLSNFPTKGKNILVGPGENAGVIDVGNNQKLVFKIESHNHPSAIEPFQGAATGVGGILRDIFTMGARPIAVLNSLRFGNLDKTSNMDLLRGVVSGIAHYGNCVGVPTVGGEIDFDDSYSGNPLVNVMALGLLETNEIVCSGAKNVGSPVLYVGNTTGRDGVGGASFASSELTITSLDDRPAVQVGDPFIEKSLIEACLDAFKTGDVIAAQDMGAAGLTCSSAEMAANGNLGISIDLDLVPSREDNMSSYQYLLSESQERMLFVVKEEKINNLIEKFNKWGLYANVIGEVIETNEVIISHKRKIVAQIPTSALSDDTPVNLHNVMKNPPNYLLKKWKWNENNLPEINEQKIFSLKENKSFSYSEIILKLLANPSIASKRWIYKQYDSQVQANTVFKPGESDAAVIRLREQNEKNKSKVFSGVAASVDCNSRWVSLDPFRGTIAAVAESARNVSCVGAEPVAITNNLNFSSPETEIGYWQLSSSCNAISEACKALETPVTGGNVSLYNESKNRDNEITPINPTPVIGMVGKIDNVEKAISTEWKNINDQIWLIGSHKSETTIAASSYLEYFHGEITGRPPKIDLQDEKFCQSFLRNAILNNFVVSSHDISDGGLAIALAECCILSAKGATIELEKDLNRDDNVLFSEGGSRIIFSIDKMKEKEWSNYLKKIQINSQSNVYVKKIGYVSSEILKIKIQDKNICDISVEELTEKFNNSISGYF</sequence>